<name>MASTE_EUMFR</name>
<accession>P0CJ39</accession>
<keyword id="KW-0027">Amidation</keyword>
<keyword id="KW-0044">Antibiotic</keyword>
<keyword id="KW-0929">Antimicrobial</keyword>
<keyword id="KW-0204">Cytolysis</keyword>
<keyword id="KW-0903">Direct protein sequencing</keyword>
<keyword id="KW-0295">Fungicide</keyword>
<keyword id="KW-1213">G-protein coupled receptor impairing toxin</keyword>
<keyword id="KW-0391">Immunity</keyword>
<keyword id="KW-0399">Innate immunity</keyword>
<keyword id="KW-0467">Mast cell degranulation</keyword>
<keyword id="KW-0472">Membrane</keyword>
<keyword id="KW-0964">Secreted</keyword>
<keyword id="KW-1052">Target cell membrane</keyword>
<keyword id="KW-1053">Target membrane</keyword>
<keyword id="KW-0800">Toxin</keyword>
<sequence>FDVMGIIKKIAGAL</sequence>
<feature type="peptide" id="PRO_0000411090" description="Eumenine mastoparan-EF" evidence="3">
    <location>
        <begin position="1"/>
        <end position="14"/>
    </location>
</feature>
<feature type="modified residue" description="Leucine amide" evidence="3">
    <location>
        <position position="14"/>
    </location>
</feature>
<proteinExistence type="evidence at protein level"/>
<comment type="function">
    <text evidence="1 2 3">Linear cationic alpha-helical peptide with antimicrobial activities against both Gram-positive and Gram-negative strains and against the yeast C.albicans. Shows moderate mast cell degranulation and leishmanicidal activities. Has a very low hemolytic activity (PubMed:21549739). Its mast cell degranulation activity may be related to the activation of G-protein coupled receptors in mast cells as well as interaction with other proteins located in cell endosomal membranes in the mast cells (By similarity).</text>
</comment>
<comment type="subcellular location">
    <subcellularLocation>
        <location evidence="3">Secreted</location>
    </subcellularLocation>
    <subcellularLocation>
        <location evidence="3">Target cell membrane</location>
    </subcellularLocation>
    <text evidence="6">Assumes an amphipathic alpha-helical conformation in a lipid environment.</text>
</comment>
<comment type="tissue specificity">
    <text evidence="6">Expressed by the venom gland.</text>
</comment>
<comment type="similarity">
    <text evidence="5">Belongs to the MCD family. Mastoparan subfamily.</text>
</comment>
<evidence type="ECO:0000250" key="1">
    <source>
        <dbReference type="UniProtKB" id="P01514"/>
    </source>
</evidence>
<evidence type="ECO:0000250" key="2">
    <source>
        <dbReference type="UniProtKB" id="P84914"/>
    </source>
</evidence>
<evidence type="ECO:0000269" key="3">
    <source>
    </source>
</evidence>
<evidence type="ECO:0000303" key="4">
    <source>
    </source>
</evidence>
<evidence type="ECO:0000305" key="5"/>
<evidence type="ECO:0000305" key="6">
    <source>
    </source>
</evidence>
<organism>
    <name type="scientific">Eumenes fraterculus</name>
    <name type="common">Solitary wasp</name>
    <dbReference type="NCBI Taxonomy" id="1035771"/>
    <lineage>
        <taxon>Eukaryota</taxon>
        <taxon>Metazoa</taxon>
        <taxon>Ecdysozoa</taxon>
        <taxon>Arthropoda</taxon>
        <taxon>Hexapoda</taxon>
        <taxon>Insecta</taxon>
        <taxon>Pterygota</taxon>
        <taxon>Neoptera</taxon>
        <taxon>Endopterygota</taxon>
        <taxon>Hymenoptera</taxon>
        <taxon>Apocrita</taxon>
        <taxon>Aculeata</taxon>
        <taxon>Vespoidea</taxon>
        <taxon>Vespidae</taxon>
        <taxon>Eumeninae</taxon>
        <taxon>Eumenes</taxon>
    </lineage>
</organism>
<protein>
    <recommendedName>
        <fullName evidence="4">Eumenine mastoparan-EF</fullName>
        <shortName evidence="4">EMP-EF</shortName>
    </recommendedName>
</protein>
<dbReference type="GO" id="GO:0005576">
    <property type="term" value="C:extracellular region"/>
    <property type="evidence" value="ECO:0007669"/>
    <property type="project" value="UniProtKB-SubCell"/>
</dbReference>
<dbReference type="GO" id="GO:0016020">
    <property type="term" value="C:membrane"/>
    <property type="evidence" value="ECO:0007669"/>
    <property type="project" value="UniProtKB-KW"/>
</dbReference>
<dbReference type="GO" id="GO:0044218">
    <property type="term" value="C:other organism cell membrane"/>
    <property type="evidence" value="ECO:0007669"/>
    <property type="project" value="UniProtKB-KW"/>
</dbReference>
<dbReference type="GO" id="GO:0090729">
    <property type="term" value="F:toxin activity"/>
    <property type="evidence" value="ECO:0007669"/>
    <property type="project" value="UniProtKB-KW"/>
</dbReference>
<dbReference type="GO" id="GO:0042742">
    <property type="term" value="P:defense response to bacterium"/>
    <property type="evidence" value="ECO:0007669"/>
    <property type="project" value="UniProtKB-KW"/>
</dbReference>
<dbReference type="GO" id="GO:0050832">
    <property type="term" value="P:defense response to fungus"/>
    <property type="evidence" value="ECO:0007669"/>
    <property type="project" value="UniProtKB-KW"/>
</dbReference>
<dbReference type="GO" id="GO:0045087">
    <property type="term" value="P:innate immune response"/>
    <property type="evidence" value="ECO:0007669"/>
    <property type="project" value="UniProtKB-KW"/>
</dbReference>
<dbReference type="GO" id="GO:0031640">
    <property type="term" value="P:killing of cells of another organism"/>
    <property type="evidence" value="ECO:0007669"/>
    <property type="project" value="UniProtKB-KW"/>
</dbReference>
<reference key="1">
    <citation type="journal article" date="2011" name="Toxicon">
        <title>Chemical and biological characterization of four new linear cationic alpha-helical peptides from the venoms of two solitary eumenine wasps.</title>
        <authorList>
            <person name="Rangel M."/>
            <person name="Dos Santos Cabrera M.P."/>
            <person name="Kazuma K."/>
            <person name="Ando K."/>
            <person name="Wang X."/>
            <person name="Kato M."/>
            <person name="Nihei K.I."/>
            <person name="Hirata I.Y."/>
            <person name="Cross T.J."/>
            <person name="Garcia A.N."/>
            <person name="Faquim-Mauro E.L."/>
            <person name="Franzolin M.R."/>
            <person name="Fuchino H."/>
            <person name="Mori-Yasumoto K."/>
            <person name="Sekita S."/>
            <person name="Kadowaki M."/>
            <person name="Satake M."/>
            <person name="Konno K."/>
        </authorList>
    </citation>
    <scope>PROTEIN SEQUENCE</scope>
    <scope>SYNTHESIS</scope>
    <scope>FUNCTION</scope>
    <scope>SUBCELLULAR LOCATION</scope>
    <scope>IDENTIFICATION BY MASS SPECTROMETRY</scope>
    <scope>CIRCULAR DICHROISM</scope>
    <scope>AMIDATION AT LEU-14</scope>
    <source>
        <tissue>Venom</tissue>
    </source>
</reference>
<reference key="2">
    <citation type="journal article" date="2016" name="Toxins">
        <title>Peptide toxins in solitary wasp venoms.</title>
        <authorList>
            <person name="Konno K."/>
            <person name="Kazuma K."/>
            <person name="Nihei K."/>
        </authorList>
    </citation>
    <scope>REVIEW</scope>
</reference>